<organism>
    <name type="scientific">Salmonella typhimurium (strain LT2 / SGSC1412 / ATCC 700720)</name>
    <dbReference type="NCBI Taxonomy" id="99287"/>
    <lineage>
        <taxon>Bacteria</taxon>
        <taxon>Pseudomonadati</taxon>
        <taxon>Pseudomonadota</taxon>
        <taxon>Gammaproteobacteria</taxon>
        <taxon>Enterobacterales</taxon>
        <taxon>Enterobacteriaceae</taxon>
        <taxon>Salmonella</taxon>
    </lineage>
</organism>
<name>FIEF_SALTY</name>
<accession>Q8ZKR4</accession>
<gene>
    <name evidence="1" type="primary">fieF</name>
    <name type="ordered locus">STM4061</name>
</gene>
<comment type="function">
    <text evidence="1">Divalent metal cation transporter which exports Zn(2+), Cd(2+) and possibly Fe(2+). May be involved in zinc and iron detoxification by efflux.</text>
</comment>
<comment type="catalytic activity">
    <reaction evidence="1">
        <text>Zn(2+)(in) + H(+)(out) = Zn(2+)(out) + H(+)(in)</text>
        <dbReference type="Rhea" id="RHEA:28839"/>
        <dbReference type="ChEBI" id="CHEBI:15378"/>
        <dbReference type="ChEBI" id="CHEBI:29105"/>
    </reaction>
</comment>
<comment type="catalytic activity">
    <reaction evidence="1">
        <text>Cd(2+)(in) + H(+)(out) = Cd(2+)(out) + H(+)(in)</text>
        <dbReference type="Rhea" id="RHEA:28739"/>
        <dbReference type="ChEBI" id="CHEBI:15378"/>
        <dbReference type="ChEBI" id="CHEBI:48775"/>
    </reaction>
</comment>
<comment type="catalytic activity">
    <reaction evidence="1">
        <text>Fe(2+)(in) + H(+)(out) = Fe(2+)(out) + H(+)(in)</text>
        <dbReference type="Rhea" id="RHEA:29439"/>
        <dbReference type="ChEBI" id="CHEBI:15378"/>
        <dbReference type="ChEBI" id="CHEBI:29033"/>
    </reaction>
</comment>
<comment type="subunit">
    <text evidence="1">Homodimer.</text>
</comment>
<comment type="subcellular location">
    <subcellularLocation>
        <location evidence="1">Cell inner membrane</location>
        <topology evidence="1">Multi-pass membrane protein</topology>
    </subcellularLocation>
</comment>
<comment type="similarity">
    <text evidence="1 2">Belongs to the cation diffusion facilitator (CDF) transporter (TC 2.A.4) family. FieF subfamily.</text>
</comment>
<reference key="1">
    <citation type="journal article" date="2001" name="Nature">
        <title>Complete genome sequence of Salmonella enterica serovar Typhimurium LT2.</title>
        <authorList>
            <person name="McClelland M."/>
            <person name="Sanderson K.E."/>
            <person name="Spieth J."/>
            <person name="Clifton S.W."/>
            <person name="Latreille P."/>
            <person name="Courtney L."/>
            <person name="Porwollik S."/>
            <person name="Ali J."/>
            <person name="Dante M."/>
            <person name="Du F."/>
            <person name="Hou S."/>
            <person name="Layman D."/>
            <person name="Leonard S."/>
            <person name="Nguyen C."/>
            <person name="Scott K."/>
            <person name="Holmes A."/>
            <person name="Grewal N."/>
            <person name="Mulvaney E."/>
            <person name="Ryan E."/>
            <person name="Sun H."/>
            <person name="Florea L."/>
            <person name="Miller W."/>
            <person name="Stoneking T."/>
            <person name="Nhan M."/>
            <person name="Waterston R."/>
            <person name="Wilson R.K."/>
        </authorList>
    </citation>
    <scope>NUCLEOTIDE SEQUENCE [LARGE SCALE GENOMIC DNA]</scope>
    <source>
        <strain>LT2 / SGSC1412 / ATCC 700720</strain>
    </source>
</reference>
<feature type="chain" id="PRO_0000206131" description="Cation-efflux pump FieF">
    <location>
        <begin position="1"/>
        <end position="300"/>
    </location>
</feature>
<feature type="transmembrane region" description="Helical" evidence="1">
    <location>
        <begin position="24"/>
        <end position="44"/>
    </location>
</feature>
<feature type="transmembrane region" description="Helical" evidence="1">
    <location>
        <begin position="82"/>
        <end position="102"/>
    </location>
</feature>
<feature type="transmembrane region" description="Helical" evidence="1">
    <location>
        <begin position="114"/>
        <end position="134"/>
    </location>
</feature>
<feature type="transmembrane region" description="Helical" evidence="1">
    <location>
        <begin position="156"/>
        <end position="176"/>
    </location>
</feature>
<feature type="transmembrane region" description="Helical" evidence="1">
    <location>
        <begin position="178"/>
        <end position="198"/>
    </location>
</feature>
<feature type="binding site" evidence="1">
    <location>
        <position position="45"/>
    </location>
    <ligand>
        <name>Zn(2+)</name>
        <dbReference type="ChEBI" id="CHEBI:29105"/>
    </ligand>
</feature>
<feature type="binding site" evidence="1">
    <location>
        <position position="49"/>
    </location>
    <ligand>
        <name>Zn(2+)</name>
        <dbReference type="ChEBI" id="CHEBI:29105"/>
    </ligand>
</feature>
<feature type="binding site" evidence="1">
    <location>
        <position position="153"/>
    </location>
    <ligand>
        <name>Zn(2+)</name>
        <dbReference type="ChEBI" id="CHEBI:29105"/>
    </ligand>
</feature>
<feature type="binding site" evidence="1">
    <location>
        <position position="157"/>
    </location>
    <ligand>
        <name>Zn(2+)</name>
        <dbReference type="ChEBI" id="CHEBI:29105"/>
    </ligand>
</feature>
<evidence type="ECO:0000255" key="1">
    <source>
        <dbReference type="HAMAP-Rule" id="MF_01425"/>
    </source>
</evidence>
<evidence type="ECO:0000305" key="2"/>
<keyword id="KW-0997">Cell inner membrane</keyword>
<keyword id="KW-1003">Cell membrane</keyword>
<keyword id="KW-0406">Ion transport</keyword>
<keyword id="KW-0408">Iron</keyword>
<keyword id="KW-0410">Iron transport</keyword>
<keyword id="KW-0472">Membrane</keyword>
<keyword id="KW-0479">Metal-binding</keyword>
<keyword id="KW-1185">Reference proteome</keyword>
<keyword id="KW-0812">Transmembrane</keyword>
<keyword id="KW-1133">Transmembrane helix</keyword>
<keyword id="KW-0813">Transport</keyword>
<keyword id="KW-0862">Zinc</keyword>
<keyword id="KW-0864">Zinc transport</keyword>
<sequence>MNQTYGRLVSRAAIAATAMASALLLIKIFAWWYTGSVSILAALVDSLVDIAASLTNLLVVRYSLQPADDEHTFGHGKAESLAALAQSMFISGSALFLFLTSIQNLIKPTPMNDPGVGIGVTVIALICTIILVTFQRWVVRKTQSQAVRADMLHYQSDVMMNGAILIALGLSWYGWHRADALFALGIGIYILYSALRMGYEAVQSLLDRALPDAERQEIIDIVTSWPGVSGAHDLRTRQSGPTRFIQIHLEMEDNLPLVQAHFVADQVEQAILQRFPGSDVIIHQDPCSVVPREGRKFELV</sequence>
<protein>
    <recommendedName>
        <fullName evidence="1">Cation-efflux pump FieF</fullName>
    </recommendedName>
</protein>
<dbReference type="EMBL" id="AE006468">
    <property type="protein sequence ID" value="AAL22901.1"/>
    <property type="molecule type" value="Genomic_DNA"/>
</dbReference>
<dbReference type="RefSeq" id="WP_001077320.1">
    <property type="nucleotide sequence ID" value="NC_003197.2"/>
</dbReference>
<dbReference type="SMR" id="Q8ZKR4"/>
<dbReference type="STRING" id="99287.STM4061"/>
<dbReference type="PaxDb" id="99287-STM4061"/>
<dbReference type="KEGG" id="stm:STM4061"/>
<dbReference type="PATRIC" id="fig|99287.12.peg.4281"/>
<dbReference type="HOGENOM" id="CLU_013430_3_0_6"/>
<dbReference type="PhylomeDB" id="Q8ZKR4"/>
<dbReference type="BioCyc" id="SENT99287:STM4061-MONOMER"/>
<dbReference type="Proteomes" id="UP000001014">
    <property type="component" value="Chromosome"/>
</dbReference>
<dbReference type="GO" id="GO:0005886">
    <property type="term" value="C:plasma membrane"/>
    <property type="evidence" value="ECO:0000318"/>
    <property type="project" value="GO_Central"/>
</dbReference>
<dbReference type="GO" id="GO:0015086">
    <property type="term" value="F:cadmium ion transmembrane transporter activity"/>
    <property type="evidence" value="ECO:0000318"/>
    <property type="project" value="GO_Central"/>
</dbReference>
<dbReference type="GO" id="GO:0015093">
    <property type="term" value="F:ferrous iron transmembrane transporter activity"/>
    <property type="evidence" value="ECO:0000318"/>
    <property type="project" value="GO_Central"/>
</dbReference>
<dbReference type="GO" id="GO:0046872">
    <property type="term" value="F:metal ion binding"/>
    <property type="evidence" value="ECO:0007669"/>
    <property type="project" value="UniProtKB-KW"/>
</dbReference>
<dbReference type="GO" id="GO:0015341">
    <property type="term" value="F:zinc efflux antiporter activity"/>
    <property type="evidence" value="ECO:0000318"/>
    <property type="project" value="GO_Central"/>
</dbReference>
<dbReference type="GO" id="GO:0006882">
    <property type="term" value="P:intracellular zinc ion homeostasis"/>
    <property type="evidence" value="ECO:0000318"/>
    <property type="project" value="GO_Central"/>
</dbReference>
<dbReference type="FunFam" id="1.20.1510.10:FF:000001">
    <property type="entry name" value="Ferrous-iron efflux pump FieF"/>
    <property type="match status" value="1"/>
</dbReference>
<dbReference type="FunFam" id="3.30.70.1350:FF:000002">
    <property type="entry name" value="Ferrous-iron efflux pump FieF"/>
    <property type="match status" value="1"/>
</dbReference>
<dbReference type="Gene3D" id="1.20.1510.10">
    <property type="entry name" value="Cation efflux protein transmembrane domain"/>
    <property type="match status" value="1"/>
</dbReference>
<dbReference type="Gene3D" id="3.30.70.1350">
    <property type="entry name" value="Cation efflux protein, cytoplasmic domain"/>
    <property type="match status" value="1"/>
</dbReference>
<dbReference type="HAMAP" id="MF_01425">
    <property type="entry name" value="Cation_efflux_FieF"/>
    <property type="match status" value="1"/>
</dbReference>
<dbReference type="InterPro" id="IPR002524">
    <property type="entry name" value="Cation_efflux"/>
</dbReference>
<dbReference type="InterPro" id="IPR027470">
    <property type="entry name" value="Cation_efflux_CTD"/>
</dbReference>
<dbReference type="InterPro" id="IPR036837">
    <property type="entry name" value="Cation_efflux_CTD_sf"/>
</dbReference>
<dbReference type="InterPro" id="IPR023783">
    <property type="entry name" value="Cation_efflux_FieF"/>
</dbReference>
<dbReference type="InterPro" id="IPR027469">
    <property type="entry name" value="Cation_efflux_TMD_sf"/>
</dbReference>
<dbReference type="InterPro" id="IPR050291">
    <property type="entry name" value="CDF_Transporter"/>
</dbReference>
<dbReference type="NCBIfam" id="TIGR01297">
    <property type="entry name" value="CDF"/>
    <property type="match status" value="1"/>
</dbReference>
<dbReference type="NCBIfam" id="NF007064">
    <property type="entry name" value="PRK09509.1"/>
    <property type="match status" value="1"/>
</dbReference>
<dbReference type="PANTHER" id="PTHR43840:SF41">
    <property type="entry name" value="CATION-EFFLUX PUMP FIEF"/>
    <property type="match status" value="1"/>
</dbReference>
<dbReference type="PANTHER" id="PTHR43840">
    <property type="entry name" value="MITOCHONDRIAL METAL TRANSPORTER 1-RELATED"/>
    <property type="match status" value="1"/>
</dbReference>
<dbReference type="Pfam" id="PF01545">
    <property type="entry name" value="Cation_efflux"/>
    <property type="match status" value="1"/>
</dbReference>
<dbReference type="Pfam" id="PF16916">
    <property type="entry name" value="ZT_dimer"/>
    <property type="match status" value="1"/>
</dbReference>
<dbReference type="SUPFAM" id="SSF160240">
    <property type="entry name" value="Cation efflux protein cytoplasmic domain-like"/>
    <property type="match status" value="1"/>
</dbReference>
<dbReference type="SUPFAM" id="SSF161111">
    <property type="entry name" value="Cation efflux protein transmembrane domain-like"/>
    <property type="match status" value="1"/>
</dbReference>
<proteinExistence type="inferred from homology"/>